<dbReference type="EMBL" id="CP000255">
    <property type="protein sequence ID" value="ABD21155.1"/>
    <property type="molecule type" value="Genomic_DNA"/>
</dbReference>
<dbReference type="RefSeq" id="WP_000531320.1">
    <property type="nucleotide sequence ID" value="NZ_CP027476.1"/>
</dbReference>
<dbReference type="SMR" id="Q2FHK2"/>
<dbReference type="KEGG" id="saa:SAUSA300_1129"/>
<dbReference type="HOGENOM" id="CLU_129218_1_1_9"/>
<dbReference type="Proteomes" id="UP000001939">
    <property type="component" value="Chromosome"/>
</dbReference>
<dbReference type="Gene3D" id="1.10.10.10">
    <property type="entry name" value="Winged helix-like DNA-binding domain superfamily/Winged helix DNA-binding domain"/>
    <property type="match status" value="1"/>
</dbReference>
<dbReference type="HAMAP" id="MF_00245">
    <property type="entry name" value="UPF0122"/>
    <property type="match status" value="1"/>
</dbReference>
<dbReference type="InterPro" id="IPR013324">
    <property type="entry name" value="RNA_pol_sigma_r3/r4-like"/>
</dbReference>
<dbReference type="InterPro" id="IPR007394">
    <property type="entry name" value="UPF0122"/>
</dbReference>
<dbReference type="InterPro" id="IPR054831">
    <property type="entry name" value="UPF0122_fam_protein"/>
</dbReference>
<dbReference type="InterPro" id="IPR036388">
    <property type="entry name" value="WH-like_DNA-bd_sf"/>
</dbReference>
<dbReference type="NCBIfam" id="NF001067">
    <property type="entry name" value="PRK00118.1-2"/>
    <property type="match status" value="1"/>
</dbReference>
<dbReference type="NCBIfam" id="NF001070">
    <property type="entry name" value="PRK00118.1-6"/>
    <property type="match status" value="1"/>
</dbReference>
<dbReference type="NCBIfam" id="NF045758">
    <property type="entry name" value="YlxM"/>
    <property type="match status" value="1"/>
</dbReference>
<dbReference type="PANTHER" id="PTHR40083">
    <property type="entry name" value="UPF0122 PROTEIN CBO2450/CLC_2298"/>
    <property type="match status" value="1"/>
</dbReference>
<dbReference type="PANTHER" id="PTHR40083:SF1">
    <property type="entry name" value="UPF0122 PROTEIN YLXM"/>
    <property type="match status" value="1"/>
</dbReference>
<dbReference type="Pfam" id="PF04297">
    <property type="entry name" value="UPF0122"/>
    <property type="match status" value="1"/>
</dbReference>
<dbReference type="SUPFAM" id="SSF88659">
    <property type="entry name" value="Sigma3 and sigma4 domains of RNA polymerase sigma factors"/>
    <property type="match status" value="1"/>
</dbReference>
<protein>
    <recommendedName>
        <fullName evidence="1">UPF0122 protein SAUSA300_1129</fullName>
    </recommendedName>
</protein>
<proteinExistence type="inferred from homology"/>
<reference key="1">
    <citation type="journal article" date="2006" name="Lancet">
        <title>Complete genome sequence of USA300, an epidemic clone of community-acquired meticillin-resistant Staphylococcus aureus.</title>
        <authorList>
            <person name="Diep B.A."/>
            <person name="Gill S.R."/>
            <person name="Chang R.F."/>
            <person name="Phan T.H."/>
            <person name="Chen J.H."/>
            <person name="Davidson M.G."/>
            <person name="Lin F."/>
            <person name="Lin J."/>
            <person name="Carleton H.A."/>
            <person name="Mongodin E.F."/>
            <person name="Sensabaugh G.F."/>
            <person name="Perdreau-Remington F."/>
        </authorList>
    </citation>
    <scope>NUCLEOTIDE SEQUENCE [LARGE SCALE GENOMIC DNA]</scope>
    <source>
        <strain>USA300</strain>
    </source>
</reference>
<comment type="function">
    <text evidence="1">Might take part in the signal recognition particle (SRP) pathway. This is inferred from the conservation of its genetic proximity to ftsY/ffh. May be a regulatory protein.</text>
</comment>
<comment type="similarity">
    <text evidence="1">Belongs to the UPF0122 family.</text>
</comment>
<organism>
    <name type="scientific">Staphylococcus aureus (strain USA300)</name>
    <dbReference type="NCBI Taxonomy" id="367830"/>
    <lineage>
        <taxon>Bacteria</taxon>
        <taxon>Bacillati</taxon>
        <taxon>Bacillota</taxon>
        <taxon>Bacilli</taxon>
        <taxon>Bacillales</taxon>
        <taxon>Staphylococcaceae</taxon>
        <taxon>Staphylococcus</taxon>
    </lineage>
</organism>
<name>Y1129_STAA3</name>
<accession>Q2FHK2</accession>
<gene>
    <name type="ordered locus">SAUSA300_1129</name>
</gene>
<evidence type="ECO:0000255" key="1">
    <source>
        <dbReference type="HAMAP-Rule" id="MF_00245"/>
    </source>
</evidence>
<sequence length="110" mass="13581">MGQNDLVKTLRMNYLFDFYQSLLTNKQRNYLELFYLEDYSLSEIADTFNVSRQAVYDNIRRTGDLVEDYEKKLELYQKFEQRREIYDEMKQHLSNPEQIQRYIQQLEDLE</sequence>
<feature type="chain" id="PRO_1000012538" description="UPF0122 protein SAUSA300_1129">
    <location>
        <begin position="1"/>
        <end position="110"/>
    </location>
</feature>